<evidence type="ECO:0000255" key="1">
    <source>
        <dbReference type="HAMAP-Rule" id="MF_00682"/>
    </source>
</evidence>
<protein>
    <recommendedName>
        <fullName evidence="1">Co-chaperone protein HscB homolog</fullName>
    </recommendedName>
</protein>
<feature type="chain" id="PRO_1000083028" description="Co-chaperone protein HscB homolog">
    <location>
        <begin position="1"/>
        <end position="166"/>
    </location>
</feature>
<feature type="domain" description="J" evidence="1">
    <location>
        <begin position="3"/>
        <end position="73"/>
    </location>
</feature>
<gene>
    <name evidence="1" type="primary">hscB</name>
    <name type="ordered locus">RrIowa_0320</name>
</gene>
<dbReference type="EMBL" id="CP000766">
    <property type="protein sequence ID" value="ABY72224.1"/>
    <property type="molecule type" value="Genomic_DNA"/>
</dbReference>
<dbReference type="RefSeq" id="WP_012150480.1">
    <property type="nucleotide sequence ID" value="NC_010263.3"/>
</dbReference>
<dbReference type="SMR" id="B0BWJ8"/>
<dbReference type="GeneID" id="79937047"/>
<dbReference type="KEGG" id="rrj:RrIowa_0320"/>
<dbReference type="eggNOG" id="COG0484">
    <property type="taxonomic scope" value="Bacteria"/>
</dbReference>
<dbReference type="HOGENOM" id="CLU_068529_2_0_5"/>
<dbReference type="Proteomes" id="UP000000796">
    <property type="component" value="Chromosome"/>
</dbReference>
<dbReference type="GO" id="GO:0001671">
    <property type="term" value="F:ATPase activator activity"/>
    <property type="evidence" value="ECO:0007669"/>
    <property type="project" value="InterPro"/>
</dbReference>
<dbReference type="GO" id="GO:0051087">
    <property type="term" value="F:protein-folding chaperone binding"/>
    <property type="evidence" value="ECO:0007669"/>
    <property type="project" value="InterPro"/>
</dbReference>
<dbReference type="GO" id="GO:0044571">
    <property type="term" value="P:[2Fe-2S] cluster assembly"/>
    <property type="evidence" value="ECO:0007669"/>
    <property type="project" value="InterPro"/>
</dbReference>
<dbReference type="GO" id="GO:0051259">
    <property type="term" value="P:protein complex oligomerization"/>
    <property type="evidence" value="ECO:0007669"/>
    <property type="project" value="InterPro"/>
</dbReference>
<dbReference type="GO" id="GO:0006457">
    <property type="term" value="P:protein folding"/>
    <property type="evidence" value="ECO:0007669"/>
    <property type="project" value="UniProtKB-UniRule"/>
</dbReference>
<dbReference type="CDD" id="cd06257">
    <property type="entry name" value="DnaJ"/>
    <property type="match status" value="1"/>
</dbReference>
<dbReference type="Gene3D" id="1.10.287.110">
    <property type="entry name" value="DnaJ domain"/>
    <property type="match status" value="1"/>
</dbReference>
<dbReference type="HAMAP" id="MF_00682">
    <property type="entry name" value="HscB"/>
    <property type="match status" value="1"/>
</dbReference>
<dbReference type="InterPro" id="IPR001623">
    <property type="entry name" value="DnaJ_domain"/>
</dbReference>
<dbReference type="InterPro" id="IPR004640">
    <property type="entry name" value="HscB"/>
</dbReference>
<dbReference type="InterPro" id="IPR036386">
    <property type="entry name" value="HscB_C_sf"/>
</dbReference>
<dbReference type="InterPro" id="IPR036869">
    <property type="entry name" value="J_dom_sf"/>
</dbReference>
<dbReference type="NCBIfam" id="TIGR00714">
    <property type="entry name" value="hscB"/>
    <property type="match status" value="1"/>
</dbReference>
<dbReference type="PANTHER" id="PTHR14021">
    <property type="entry name" value="IRON-SULFUR CLUSTER CO-CHAPERONE PROTEIN HSCB"/>
    <property type="match status" value="1"/>
</dbReference>
<dbReference type="PANTHER" id="PTHR14021:SF15">
    <property type="entry name" value="IRON-SULFUR CLUSTER CO-CHAPERONE PROTEIN HSCB"/>
    <property type="match status" value="1"/>
</dbReference>
<dbReference type="Pfam" id="PF00226">
    <property type="entry name" value="DnaJ"/>
    <property type="match status" value="1"/>
</dbReference>
<dbReference type="SMART" id="SM00271">
    <property type="entry name" value="DnaJ"/>
    <property type="match status" value="1"/>
</dbReference>
<dbReference type="SUPFAM" id="SSF46565">
    <property type="entry name" value="Chaperone J-domain"/>
    <property type="match status" value="1"/>
</dbReference>
<dbReference type="SUPFAM" id="SSF47144">
    <property type="entry name" value="HSC20 (HSCB), C-terminal oligomerisation domain"/>
    <property type="match status" value="1"/>
</dbReference>
<dbReference type="PROSITE" id="PS50076">
    <property type="entry name" value="DNAJ_2"/>
    <property type="match status" value="1"/>
</dbReference>
<proteinExistence type="inferred from homology"/>
<name>HSCB_RICRO</name>
<reference key="1">
    <citation type="journal article" date="2008" name="Infect. Immun.">
        <title>Genomic comparison of virulent Rickettsia rickettsii Sheila Smith and avirulent Rickettsia rickettsii Iowa.</title>
        <authorList>
            <person name="Ellison D.W."/>
            <person name="Clark T.R."/>
            <person name="Sturdevant D.E."/>
            <person name="Virtaneva K."/>
            <person name="Porcella S.F."/>
            <person name="Hackstadt T."/>
        </authorList>
    </citation>
    <scope>NUCLEOTIDE SEQUENCE [LARGE SCALE GENOMIC DNA]</scope>
    <source>
        <strain>Iowa</strain>
    </source>
</reference>
<sequence>MQNYFQLLGLPQEYNINLKILEKQYFAMQVKYHPDKAKTLQEKEQNLITAAELNNAYSTLKDALKRAEYMLLLQNINLNDEKTRSLLSPLELSIFWDEMEIIENTILFSDLEKIKDKYELMKKLEIDALKQAFEEQNLSDATIKTSKLKYIGTLLHKLQEKIKSCK</sequence>
<accession>B0BWJ8</accession>
<keyword id="KW-0143">Chaperone</keyword>
<organism>
    <name type="scientific">Rickettsia rickettsii (strain Iowa)</name>
    <dbReference type="NCBI Taxonomy" id="452659"/>
    <lineage>
        <taxon>Bacteria</taxon>
        <taxon>Pseudomonadati</taxon>
        <taxon>Pseudomonadota</taxon>
        <taxon>Alphaproteobacteria</taxon>
        <taxon>Rickettsiales</taxon>
        <taxon>Rickettsiaceae</taxon>
        <taxon>Rickettsieae</taxon>
        <taxon>Rickettsia</taxon>
        <taxon>spotted fever group</taxon>
    </lineage>
</organism>
<comment type="function">
    <text evidence="1">Co-chaperone involved in the maturation of iron-sulfur cluster-containing proteins. Seems to help targeting proteins to be folded toward HscA.</text>
</comment>
<comment type="subunit">
    <text evidence="1">Interacts with HscA and stimulates its ATPase activity.</text>
</comment>
<comment type="similarity">
    <text evidence="1">Belongs to the HscB family.</text>
</comment>